<dbReference type="EMBL" id="CP001598">
    <property type="protein sequence ID" value="ACQ49648.1"/>
    <property type="molecule type" value="Genomic_DNA"/>
</dbReference>
<dbReference type="RefSeq" id="WP_000101799.1">
    <property type="nucleotide sequence ID" value="NC_012659.1"/>
</dbReference>
<dbReference type="SMR" id="C3P9T1"/>
<dbReference type="GeneID" id="93010917"/>
<dbReference type="KEGG" id="bai:BAA_0152"/>
<dbReference type="HOGENOM" id="CLU_072439_5_0_9"/>
<dbReference type="GO" id="GO:1990904">
    <property type="term" value="C:ribonucleoprotein complex"/>
    <property type="evidence" value="ECO:0007669"/>
    <property type="project" value="UniProtKB-KW"/>
</dbReference>
<dbReference type="GO" id="GO:0005840">
    <property type="term" value="C:ribosome"/>
    <property type="evidence" value="ECO:0007669"/>
    <property type="project" value="UniProtKB-KW"/>
</dbReference>
<dbReference type="GO" id="GO:0019843">
    <property type="term" value="F:rRNA binding"/>
    <property type="evidence" value="ECO:0007669"/>
    <property type="project" value="UniProtKB-UniRule"/>
</dbReference>
<dbReference type="GO" id="GO:0003735">
    <property type="term" value="F:structural constituent of ribosome"/>
    <property type="evidence" value="ECO:0007669"/>
    <property type="project" value="InterPro"/>
</dbReference>
<dbReference type="GO" id="GO:0006412">
    <property type="term" value="P:translation"/>
    <property type="evidence" value="ECO:0007669"/>
    <property type="project" value="UniProtKB-UniRule"/>
</dbReference>
<dbReference type="FunFam" id="3.30.420.80:FF:000001">
    <property type="entry name" value="30S ribosomal protein S11"/>
    <property type="match status" value="1"/>
</dbReference>
<dbReference type="Gene3D" id="3.30.420.80">
    <property type="entry name" value="Ribosomal protein S11"/>
    <property type="match status" value="1"/>
</dbReference>
<dbReference type="HAMAP" id="MF_01310">
    <property type="entry name" value="Ribosomal_uS11"/>
    <property type="match status" value="1"/>
</dbReference>
<dbReference type="InterPro" id="IPR001971">
    <property type="entry name" value="Ribosomal_uS11"/>
</dbReference>
<dbReference type="InterPro" id="IPR019981">
    <property type="entry name" value="Ribosomal_uS11_bac-type"/>
</dbReference>
<dbReference type="InterPro" id="IPR018102">
    <property type="entry name" value="Ribosomal_uS11_CS"/>
</dbReference>
<dbReference type="InterPro" id="IPR036967">
    <property type="entry name" value="Ribosomal_uS11_sf"/>
</dbReference>
<dbReference type="NCBIfam" id="NF003698">
    <property type="entry name" value="PRK05309.1"/>
    <property type="match status" value="1"/>
</dbReference>
<dbReference type="NCBIfam" id="TIGR03632">
    <property type="entry name" value="uS11_bact"/>
    <property type="match status" value="1"/>
</dbReference>
<dbReference type="PANTHER" id="PTHR11759">
    <property type="entry name" value="40S RIBOSOMAL PROTEIN S14/30S RIBOSOMAL PROTEIN S11"/>
    <property type="match status" value="1"/>
</dbReference>
<dbReference type="Pfam" id="PF00411">
    <property type="entry name" value="Ribosomal_S11"/>
    <property type="match status" value="1"/>
</dbReference>
<dbReference type="PIRSF" id="PIRSF002131">
    <property type="entry name" value="Ribosomal_S11"/>
    <property type="match status" value="1"/>
</dbReference>
<dbReference type="SUPFAM" id="SSF53137">
    <property type="entry name" value="Translational machinery components"/>
    <property type="match status" value="1"/>
</dbReference>
<dbReference type="PROSITE" id="PS00054">
    <property type="entry name" value="RIBOSOMAL_S11"/>
    <property type="match status" value="1"/>
</dbReference>
<gene>
    <name evidence="1" type="primary">rpsK</name>
    <name type="ordered locus">BAA_0152</name>
</gene>
<keyword id="KW-0687">Ribonucleoprotein</keyword>
<keyword id="KW-0689">Ribosomal protein</keyword>
<keyword id="KW-0694">RNA-binding</keyword>
<keyword id="KW-0699">rRNA-binding</keyword>
<evidence type="ECO:0000255" key="1">
    <source>
        <dbReference type="HAMAP-Rule" id="MF_01310"/>
    </source>
</evidence>
<evidence type="ECO:0000305" key="2"/>
<sequence length="129" mass="13739">MARKTNTRKKRVKKNIEAGVAHIRSTFNNTIVTLTDTHGNALSWSSAGALGFRGSRKSTPFAAQMAAETAAKAAMEHGLKTLEVTVKGPGAGREAAIRALQAAGLEVTAIRDVTPVPHNGCRPPKRRRV</sequence>
<reference key="1">
    <citation type="submission" date="2009-04" db="EMBL/GenBank/DDBJ databases">
        <title>Genome sequence of Bacillus anthracis A0248.</title>
        <authorList>
            <person name="Dodson R.J."/>
            <person name="Munk A.C."/>
            <person name="Bruce D."/>
            <person name="Detter C."/>
            <person name="Tapia R."/>
            <person name="Sutton G."/>
            <person name="Sims D."/>
            <person name="Brettin T."/>
        </authorList>
    </citation>
    <scope>NUCLEOTIDE SEQUENCE [LARGE SCALE GENOMIC DNA]</scope>
    <source>
        <strain>A0248</strain>
    </source>
</reference>
<feature type="chain" id="PRO_1000165527" description="Small ribosomal subunit protein uS11">
    <location>
        <begin position="1"/>
        <end position="129"/>
    </location>
</feature>
<protein>
    <recommendedName>
        <fullName evidence="1">Small ribosomal subunit protein uS11</fullName>
    </recommendedName>
    <alternativeName>
        <fullName evidence="2">30S ribosomal protein S11</fullName>
    </alternativeName>
</protein>
<accession>C3P9T1</accession>
<organism>
    <name type="scientific">Bacillus anthracis (strain A0248)</name>
    <dbReference type="NCBI Taxonomy" id="592021"/>
    <lineage>
        <taxon>Bacteria</taxon>
        <taxon>Bacillati</taxon>
        <taxon>Bacillota</taxon>
        <taxon>Bacilli</taxon>
        <taxon>Bacillales</taxon>
        <taxon>Bacillaceae</taxon>
        <taxon>Bacillus</taxon>
        <taxon>Bacillus cereus group</taxon>
    </lineage>
</organism>
<proteinExistence type="inferred from homology"/>
<comment type="function">
    <text evidence="1">Located on the platform of the 30S subunit, it bridges several disparate RNA helices of the 16S rRNA. Forms part of the Shine-Dalgarno cleft in the 70S ribosome.</text>
</comment>
<comment type="subunit">
    <text evidence="1">Part of the 30S ribosomal subunit. Interacts with proteins S7 and S18. Binds to IF-3.</text>
</comment>
<comment type="similarity">
    <text evidence="1">Belongs to the universal ribosomal protein uS11 family.</text>
</comment>
<name>RS11_BACAA</name>